<dbReference type="EMBL" id="AF001663">
    <property type="protein sequence ID" value="AAC31250.1"/>
    <property type="molecule type" value="Genomic_RNA"/>
</dbReference>
<dbReference type="SMR" id="Q9YZ76"/>
<dbReference type="GO" id="GO:0030430">
    <property type="term" value="C:host cell cytoplasm"/>
    <property type="evidence" value="ECO:0007669"/>
    <property type="project" value="UniProtKB-SubCell"/>
</dbReference>
<dbReference type="GO" id="GO:0042025">
    <property type="term" value="C:host cell nucleus"/>
    <property type="evidence" value="ECO:0007669"/>
    <property type="project" value="UniProtKB-SubCell"/>
</dbReference>
<dbReference type="GO" id="GO:0030291">
    <property type="term" value="F:protein serine/threonine kinase inhibitor activity"/>
    <property type="evidence" value="ECO:0007669"/>
    <property type="project" value="UniProtKB-KW"/>
</dbReference>
<dbReference type="GO" id="GO:0003723">
    <property type="term" value="F:RNA binding"/>
    <property type="evidence" value="ECO:0007669"/>
    <property type="project" value="UniProtKB-KW"/>
</dbReference>
<dbReference type="GO" id="GO:0039540">
    <property type="term" value="P:symbiont-mediated suppression of host cytoplasmic pattern recognition receptor signaling pathway via inhibition of RIG-I activity"/>
    <property type="evidence" value="ECO:0007669"/>
    <property type="project" value="UniProtKB-KW"/>
</dbReference>
<dbReference type="GO" id="GO:0039657">
    <property type="term" value="P:symbiont-mediated suppression of host gene expression"/>
    <property type="evidence" value="ECO:0007669"/>
    <property type="project" value="UniProtKB-KW"/>
</dbReference>
<dbReference type="GO" id="GO:0039524">
    <property type="term" value="P:symbiont-mediated suppression of host mRNA processing"/>
    <property type="evidence" value="ECO:0007669"/>
    <property type="project" value="UniProtKB-KW"/>
</dbReference>
<dbReference type="GO" id="GO:0039580">
    <property type="term" value="P:symbiont-mediated suppression of host PKR/eIFalpha signaling"/>
    <property type="evidence" value="ECO:0007669"/>
    <property type="project" value="UniProtKB-KW"/>
</dbReference>
<dbReference type="GO" id="GO:0039502">
    <property type="term" value="P:symbiont-mediated suppression of host type I interferon-mediated signaling pathway"/>
    <property type="evidence" value="ECO:0007669"/>
    <property type="project" value="UniProtKB-KW"/>
</dbReference>
<dbReference type="FunFam" id="1.10.287.10:FF:000001">
    <property type="entry name" value="Non-structural protein 1"/>
    <property type="match status" value="1"/>
</dbReference>
<dbReference type="FunFam" id="3.30.420.330:FF:000001">
    <property type="entry name" value="Non-structural protein 1"/>
    <property type="match status" value="1"/>
</dbReference>
<dbReference type="Gene3D" id="3.30.420.330">
    <property type="entry name" value="Influenza virus non-structural protein, effector domain"/>
    <property type="match status" value="1"/>
</dbReference>
<dbReference type="Gene3D" id="1.10.287.10">
    <property type="entry name" value="S15/NS1, RNA-binding"/>
    <property type="match status" value="1"/>
</dbReference>
<dbReference type="HAMAP" id="MF_04066">
    <property type="entry name" value="INFV_NS1"/>
    <property type="match status" value="1"/>
</dbReference>
<dbReference type="InterPro" id="IPR004208">
    <property type="entry name" value="NS1"/>
</dbReference>
<dbReference type="InterPro" id="IPR000256">
    <property type="entry name" value="NS1A"/>
</dbReference>
<dbReference type="InterPro" id="IPR038064">
    <property type="entry name" value="NS1A_effect_dom-like_sf"/>
</dbReference>
<dbReference type="InterPro" id="IPR009068">
    <property type="entry name" value="uS15_NS1_RNA-bd_sf"/>
</dbReference>
<dbReference type="Pfam" id="PF00600">
    <property type="entry name" value="Flu_NS1"/>
    <property type="match status" value="1"/>
</dbReference>
<dbReference type="SUPFAM" id="SSF143021">
    <property type="entry name" value="Ns1 effector domain-like"/>
    <property type="match status" value="1"/>
</dbReference>
<dbReference type="SUPFAM" id="SSF47060">
    <property type="entry name" value="S15/NS1 RNA-binding domain"/>
    <property type="match status" value="1"/>
</dbReference>
<gene>
    <name evidence="1" type="primary">NS</name>
</gene>
<reference key="1">
    <citation type="journal article" date="1998" name="Arch. Virol.">
        <title>Phylogenetic analyses of the matrix and non-structural genes of equine influenza viruses.</title>
        <authorList>
            <person name="Lindstrom S."/>
            <person name="Endo A."/>
            <person name="Sugita S."/>
            <person name="Pecoraro M."/>
            <person name="Hiromoto Y."/>
            <person name="Kamada M."/>
            <person name="Takahashi T."/>
            <person name="Nerome K."/>
        </authorList>
    </citation>
    <scope>NUCLEOTIDE SEQUENCE [GENOMIC RNA]</scope>
</reference>
<protein>
    <recommendedName>
        <fullName evidence="1">Non-structural protein 1</fullName>
        <shortName evidence="1">NS1</shortName>
    </recommendedName>
    <alternativeName>
        <fullName evidence="1">NS1A</fullName>
    </alternativeName>
</protein>
<feature type="chain" id="PRO_0000324258" description="Non-structural protein 1">
    <location>
        <begin position="1"/>
        <end position="230"/>
    </location>
</feature>
<feature type="region of interest" description="RNA-binding and homodimerization" evidence="1">
    <location>
        <begin position="1"/>
        <end position="73"/>
    </location>
</feature>
<feature type="region of interest" description="CPSF4-binding" evidence="1">
    <location>
        <begin position="180"/>
        <end position="215"/>
    </location>
</feature>
<feature type="region of interest" description="Disordered" evidence="2">
    <location>
        <begin position="206"/>
        <end position="230"/>
    </location>
</feature>
<feature type="region of interest" description="PABPN1-binding" evidence="1">
    <location>
        <begin position="223"/>
        <end position="230"/>
    </location>
</feature>
<feature type="short sequence motif" description="Nuclear localization signal" evidence="1">
    <location>
        <begin position="34"/>
        <end position="38"/>
    </location>
</feature>
<feature type="short sequence motif" description="Nuclear export signal" evidence="1">
    <location>
        <begin position="137"/>
        <end position="146"/>
    </location>
</feature>
<comment type="function">
    <text evidence="1">Inhibits post-transcriptional processing of cellular pre-mRNA, by binding and inhibiting two cellular proteins that are required for the 3'-end processing of cellular pre-mRNAs: the 30 kDa cleavage and polyadenylation specificity factor/CPSF4 and the poly(A)-binding protein 2/PABPN1. In turn, unprocessed 3' end pre-mRNAs accumulate in the host nucleus and are no longer exported to the cytoplasm. Cellular protein synthesis is thereby shut off very early after virus infection. Viral protein synthesis is not affected by the inhibition of the cellular 3' end processing machinery because the poly(A) tails of viral mRNAs are produced by the viral polymerase through a stuttering mechanism. Prevents the establishment of the cellular antiviral state by inhibiting TRIM25-mediated RIGI ubiquitination, which normally triggers the antiviral transduction signal that leads to the activation of type I IFN genes by transcription factors IRF3 and IRF7. Also binds poly(A) and U6 snRNA. Inhibits the integrated stress response (ISR) in the infected cell by blocking dsRNA binding by EIF2AK2/PKR and further phosphorylation of EIF2S1/EIF-2ALPHA. Stress granule formation is thus inhibited, which allows protein synthesis and viral replication.</text>
</comment>
<comment type="subunit">
    <text evidence="1">Homodimer. Interacts with host TRIM25 (via coiled coil); this interaction specifically inhibits TRIM25 multimerization and TRIM25-mediated RIGI CARD ubiquitination. Interacts with human EIF2AK2/PKR, CPSF4, IVNS1ABP and PABPN1.</text>
</comment>
<comment type="subcellular location">
    <subcellularLocation>
        <location evidence="1">Host nucleus</location>
    </subcellularLocation>
    <subcellularLocation>
        <location evidence="1">Host cytoplasm</location>
    </subcellularLocation>
    <text evidence="1">In uninfected, transfected cells, NS1 is localized in the nucleus. Only in virus infected cells, the nuclear export signal is unveiled, presumably by a viral protein, and a fraction of NS1 is exported in the cytoplasm.</text>
</comment>
<comment type="alternative products">
    <event type="alternative splicing"/>
    <isoform>
        <id>Q9YZ76-1</id>
        <name>NS1</name>
        <sequence type="displayed"/>
    </isoform>
    <isoform>
        <id>O89285-1</id>
        <name>NEP</name>
        <name>NS2</name>
        <sequence type="external"/>
    </isoform>
</comment>
<comment type="domain">
    <text evidence="1">The dsRNA-binding region is required for suppression of RNA silencing.</text>
</comment>
<comment type="PTM">
    <text evidence="1">Upon interferon induction, ISGylated via host HERC5; this results in the impairment of NS1 interaction with RNA targets due to its inability to form homodimers and to interact with host EIF2AK2/PKR.</text>
</comment>
<comment type="similarity">
    <text evidence="1">Belongs to the influenza A viruses NS1 family.</text>
</comment>
<accession>Q9YZ76</accession>
<evidence type="ECO:0000255" key="1">
    <source>
        <dbReference type="HAMAP-Rule" id="MF_04066"/>
    </source>
</evidence>
<evidence type="ECO:0000256" key="2">
    <source>
        <dbReference type="SAM" id="MobiDB-lite"/>
    </source>
</evidence>
<sequence length="230" mass="26126">MDSNTVSSFQVDCFLWHVRKRFADQELGDAPFLDRLRRDQKSLKGRGSTLGLDIETATHAGKQIVERILEEESDEALKMTIASVPTSRYLTDMTLDEMSRDWFMLMPKQKVTGSLCIRMDQAIMDKNIILKANFSVIFERLETLILLRAFTEEGAVVGEISPLPSLPGHTNEDVKNAIGVLIGGLKWNDNTVRVSETLQRFAWRSSHENGRPSFPPKQKRKMARTIESEV</sequence>
<proteinExistence type="inferred from homology"/>
<organismHost>
    <name type="scientific">Aves</name>
    <dbReference type="NCBI Taxonomy" id="8782"/>
</organismHost>
<organismHost>
    <name type="scientific">Equus caballus</name>
    <name type="common">Horse</name>
    <dbReference type="NCBI Taxonomy" id="9796"/>
</organismHost>
<organismHost>
    <name type="scientific">Homo sapiens</name>
    <name type="common">Human</name>
    <dbReference type="NCBI Taxonomy" id="9606"/>
</organismHost>
<organismHost>
    <name type="scientific">Phocidae</name>
    <name type="common">true seals</name>
    <dbReference type="NCBI Taxonomy" id="9709"/>
</organismHost>
<name>NS1_I77A9</name>
<organism>
    <name type="scientific">Influenza A virus (strain A/Equine/New Market/1/1977 H7N7)</name>
    <dbReference type="NCBI Taxonomy" id="217831"/>
    <lineage>
        <taxon>Viruses</taxon>
        <taxon>Riboviria</taxon>
        <taxon>Orthornavirae</taxon>
        <taxon>Negarnaviricota</taxon>
        <taxon>Polyploviricotina</taxon>
        <taxon>Insthoviricetes</taxon>
        <taxon>Articulavirales</taxon>
        <taxon>Orthomyxoviridae</taxon>
        <taxon>Alphainfluenzavirus</taxon>
        <taxon>Alphainfluenzavirus influenzae</taxon>
        <taxon>Influenza A virus</taxon>
    </lineage>
</organism>
<keyword id="KW-0025">Alternative splicing</keyword>
<keyword id="KW-1262">Eukaryotic host gene expression shutoff by virus</keyword>
<keyword id="KW-1035">Host cytoplasm</keyword>
<keyword id="KW-1190">Host gene expression shutoff by virus</keyword>
<keyword id="KW-1192">Host mRNA suppression by virus</keyword>
<keyword id="KW-1048">Host nucleus</keyword>
<keyword id="KW-0945">Host-virus interaction</keyword>
<keyword id="KW-1090">Inhibition of host innate immune response by virus</keyword>
<keyword id="KW-1114">Inhibition of host interferon signaling pathway by virus</keyword>
<keyword id="KW-1102">Inhibition of host PKR by virus</keyword>
<keyword id="KW-1103">Inhibition of host pre-mRNA processing by virus</keyword>
<keyword id="KW-1088">Inhibition of host RIG-I by virus</keyword>
<keyword id="KW-1113">Inhibition of host RLR pathway by virus</keyword>
<keyword id="KW-0922">Interferon antiviral system evasion</keyword>
<keyword id="KW-0694">RNA-binding</keyword>
<keyword id="KW-0832">Ubl conjugation</keyword>
<keyword id="KW-0899">Viral immunoevasion</keyword>